<organism>
    <name type="scientific">Arabidopsis thaliana</name>
    <name type="common">Mouse-ear cress</name>
    <dbReference type="NCBI Taxonomy" id="3702"/>
    <lineage>
        <taxon>Eukaryota</taxon>
        <taxon>Viridiplantae</taxon>
        <taxon>Streptophyta</taxon>
        <taxon>Embryophyta</taxon>
        <taxon>Tracheophyta</taxon>
        <taxon>Spermatophyta</taxon>
        <taxon>Magnoliopsida</taxon>
        <taxon>eudicotyledons</taxon>
        <taxon>Gunneridae</taxon>
        <taxon>Pentapetalae</taxon>
        <taxon>rosids</taxon>
        <taxon>malvids</taxon>
        <taxon>Brassicales</taxon>
        <taxon>Brassicaceae</taxon>
        <taxon>Camelineae</taxon>
        <taxon>Arabidopsis</taxon>
    </lineage>
</organism>
<dbReference type="EC" id="3.6.1.-" evidence="2"/>
<dbReference type="EC" id="3.6.1.22" evidence="5"/>
<dbReference type="EMBL" id="AF296836">
    <property type="status" value="NOT_ANNOTATED_CDS"/>
    <property type="molecule type" value="Genomic_DNA"/>
</dbReference>
<dbReference type="EMBL" id="CP002688">
    <property type="protein sequence ID" value="AED92790.1"/>
    <property type="molecule type" value="Genomic_DNA"/>
</dbReference>
<dbReference type="EMBL" id="AY049280">
    <property type="protein sequence ID" value="AAK83622.1"/>
    <property type="molecule type" value="mRNA"/>
</dbReference>
<dbReference type="EMBL" id="AY090287">
    <property type="protein sequence ID" value="AAL90948.1"/>
    <property type="molecule type" value="mRNA"/>
</dbReference>
<dbReference type="EMBL" id="AK226742">
    <property type="protein sequence ID" value="BAE98843.1"/>
    <property type="molecule type" value="mRNA"/>
</dbReference>
<dbReference type="EMBL" id="AK226922">
    <property type="protein sequence ID" value="BAE98994.1"/>
    <property type="molecule type" value="mRNA"/>
</dbReference>
<dbReference type="RefSeq" id="NP_197507.1">
    <property type="nucleotide sequence ID" value="NM_122014.4"/>
</dbReference>
<dbReference type="SMR" id="Q94A82"/>
<dbReference type="FunCoup" id="Q94A82">
    <property type="interactions" value="419"/>
</dbReference>
<dbReference type="STRING" id="3702.Q94A82"/>
<dbReference type="iPTMnet" id="Q94A82"/>
<dbReference type="PaxDb" id="3702-AT5G20070.1"/>
<dbReference type="ProteomicsDB" id="226031"/>
<dbReference type="EnsemblPlants" id="AT5G20070.1">
    <property type="protein sequence ID" value="AT5G20070.1"/>
    <property type="gene ID" value="AT5G20070"/>
</dbReference>
<dbReference type="GeneID" id="832129"/>
<dbReference type="Gramene" id="AT5G20070.1">
    <property type="protein sequence ID" value="AT5G20070.1"/>
    <property type="gene ID" value="AT5G20070"/>
</dbReference>
<dbReference type="KEGG" id="ath:AT5G20070"/>
<dbReference type="Araport" id="AT5G20070"/>
<dbReference type="TAIR" id="AT5G20070">
    <property type="gene designation" value="NUDX19"/>
</dbReference>
<dbReference type="eggNOG" id="KOG3084">
    <property type="taxonomic scope" value="Eukaryota"/>
</dbReference>
<dbReference type="HOGENOM" id="CLU_037162_0_2_1"/>
<dbReference type="InParanoid" id="Q94A82"/>
<dbReference type="OMA" id="DLVYWAV"/>
<dbReference type="PhylomeDB" id="Q94A82"/>
<dbReference type="BioCyc" id="ARA:AT5G20070-MONOMER"/>
<dbReference type="BRENDA" id="3.6.1.22">
    <property type="organism ID" value="399"/>
</dbReference>
<dbReference type="SABIO-RK" id="Q94A82"/>
<dbReference type="PRO" id="PR:Q94A82"/>
<dbReference type="Proteomes" id="UP000006548">
    <property type="component" value="Chromosome 5"/>
</dbReference>
<dbReference type="ExpressionAtlas" id="Q94A82">
    <property type="expression patterns" value="baseline and differential"/>
</dbReference>
<dbReference type="GO" id="GO:0009507">
    <property type="term" value="C:chloroplast"/>
    <property type="evidence" value="ECO:0000314"/>
    <property type="project" value="TAIR"/>
</dbReference>
<dbReference type="GO" id="GO:0046872">
    <property type="term" value="F:metal ion binding"/>
    <property type="evidence" value="ECO:0007669"/>
    <property type="project" value="UniProtKB-KW"/>
</dbReference>
<dbReference type="GO" id="GO:0000210">
    <property type="term" value="F:NAD+ diphosphatase activity"/>
    <property type="evidence" value="ECO:0007669"/>
    <property type="project" value="RHEA"/>
</dbReference>
<dbReference type="GO" id="GO:0035529">
    <property type="term" value="F:NADH pyrophosphatase activity"/>
    <property type="evidence" value="ECO:0007669"/>
    <property type="project" value="RHEA"/>
</dbReference>
<dbReference type="GO" id="GO:0110153">
    <property type="term" value="F:RNA NAD-cap (NMN-forming) hydrolase activity"/>
    <property type="evidence" value="ECO:0007669"/>
    <property type="project" value="RHEA"/>
</dbReference>
<dbReference type="CDD" id="cd03429">
    <property type="entry name" value="NUDIX_NADH_pyrophosphatase_Nudt13"/>
    <property type="match status" value="1"/>
</dbReference>
<dbReference type="FunFam" id="3.90.79.10:FF:000040">
    <property type="entry name" value="Nudix hydrolase 19, chloroplastic"/>
    <property type="match status" value="1"/>
</dbReference>
<dbReference type="FunFam" id="3.90.79.20:FF:000008">
    <property type="entry name" value="Nudix hydrolase 19, chloroplastic"/>
    <property type="match status" value="1"/>
</dbReference>
<dbReference type="Gene3D" id="3.90.79.20">
    <property type="match status" value="1"/>
</dbReference>
<dbReference type="Gene3D" id="3.90.79.10">
    <property type="entry name" value="Nucleoside Triphosphate Pyrophosphohydrolase"/>
    <property type="match status" value="1"/>
</dbReference>
<dbReference type="InterPro" id="IPR050241">
    <property type="entry name" value="NAD-cap_RNA_hydrolase_NudC"/>
</dbReference>
<dbReference type="InterPro" id="IPR015375">
    <property type="entry name" value="NADH_PPase-like_N"/>
</dbReference>
<dbReference type="InterPro" id="IPR049734">
    <property type="entry name" value="NudC-like_C"/>
</dbReference>
<dbReference type="InterPro" id="IPR020476">
    <property type="entry name" value="Nudix_hydrolase"/>
</dbReference>
<dbReference type="InterPro" id="IPR015797">
    <property type="entry name" value="NUDIX_hydrolase-like_dom_sf"/>
</dbReference>
<dbReference type="InterPro" id="IPR020084">
    <property type="entry name" value="NUDIX_hydrolase_CS"/>
</dbReference>
<dbReference type="InterPro" id="IPR000086">
    <property type="entry name" value="NUDIX_hydrolase_dom"/>
</dbReference>
<dbReference type="InterPro" id="IPR015376">
    <property type="entry name" value="Znr_NADH_PPase"/>
</dbReference>
<dbReference type="NCBIfam" id="NF001299">
    <property type="entry name" value="PRK00241.1"/>
    <property type="match status" value="1"/>
</dbReference>
<dbReference type="PANTHER" id="PTHR42904:SF6">
    <property type="entry name" value="NAD-CAPPED RNA HYDROLASE NUDT12"/>
    <property type="match status" value="1"/>
</dbReference>
<dbReference type="PANTHER" id="PTHR42904">
    <property type="entry name" value="NUDIX HYDROLASE, NUDC SUBFAMILY"/>
    <property type="match status" value="1"/>
</dbReference>
<dbReference type="Pfam" id="PF00293">
    <property type="entry name" value="NUDIX"/>
    <property type="match status" value="1"/>
</dbReference>
<dbReference type="Pfam" id="PF09296">
    <property type="entry name" value="NUDIX-like"/>
    <property type="match status" value="1"/>
</dbReference>
<dbReference type="Pfam" id="PF09297">
    <property type="entry name" value="Zn_ribbon_NUD"/>
    <property type="match status" value="1"/>
</dbReference>
<dbReference type="PRINTS" id="PR00502">
    <property type="entry name" value="NUDIXFAMILY"/>
</dbReference>
<dbReference type="SUPFAM" id="SSF55811">
    <property type="entry name" value="Nudix"/>
    <property type="match status" value="1"/>
</dbReference>
<dbReference type="PROSITE" id="PS51462">
    <property type="entry name" value="NUDIX"/>
    <property type="match status" value="1"/>
</dbReference>
<dbReference type="PROSITE" id="PS00893">
    <property type="entry name" value="NUDIX_BOX"/>
    <property type="match status" value="1"/>
</dbReference>
<keyword id="KW-0150">Chloroplast</keyword>
<keyword id="KW-0378">Hydrolase</keyword>
<keyword id="KW-0460">Magnesium</keyword>
<keyword id="KW-0479">Metal-binding</keyword>
<keyword id="KW-0520">NAD</keyword>
<keyword id="KW-0934">Plastid</keyword>
<keyword id="KW-1185">Reference proteome</keyword>
<keyword id="KW-0809">Transit peptide</keyword>
<keyword id="KW-0862">Zinc</keyword>
<feature type="transit peptide" description="Chloroplast" evidence="3">
    <location>
        <begin position="1"/>
        <end position="36"/>
    </location>
</feature>
<feature type="chain" id="PRO_0000019943" description="Nudix hydrolase 19, chloroplastic">
    <location>
        <begin position="37"/>
        <end position="438"/>
    </location>
</feature>
<feature type="domain" description="Nudix hydrolase" evidence="4">
    <location>
        <begin position="241"/>
        <end position="371"/>
    </location>
</feature>
<feature type="short sequence motif" description="Nudix box">
    <location>
        <begin position="277"/>
        <end position="298"/>
    </location>
</feature>
<feature type="short sequence motif" description="Microbody targeting signal" evidence="1">
    <location>
        <begin position="422"/>
        <end position="424"/>
    </location>
</feature>
<feature type="binding site" evidence="2">
    <location>
        <position position="212"/>
    </location>
    <ligand>
        <name>Zn(2+)</name>
        <dbReference type="ChEBI" id="CHEBI:29105"/>
    </ligand>
</feature>
<feature type="binding site" evidence="2">
    <location>
        <position position="215"/>
    </location>
    <ligand>
        <name>Zn(2+)</name>
        <dbReference type="ChEBI" id="CHEBI:29105"/>
    </ligand>
</feature>
<feature type="binding site" evidence="2">
    <location>
        <position position="230"/>
    </location>
    <ligand>
        <name>Zn(2+)</name>
        <dbReference type="ChEBI" id="CHEBI:29105"/>
    </ligand>
</feature>
<feature type="binding site" evidence="2">
    <location>
        <position position="235"/>
    </location>
    <ligand>
        <name>Zn(2+)</name>
        <dbReference type="ChEBI" id="CHEBI:29105"/>
    </ligand>
</feature>
<feature type="binding site" evidence="2">
    <location>
        <position position="240"/>
    </location>
    <ligand>
        <name>substrate</name>
    </ligand>
</feature>
<feature type="binding site" evidence="2">
    <location>
        <begin position="276"/>
        <end position="278"/>
    </location>
    <ligand>
        <name>substrate</name>
    </ligand>
</feature>
<feature type="binding site" evidence="2">
    <location>
        <position position="276"/>
    </location>
    <ligand>
        <name>Mg(2+)</name>
        <dbReference type="ChEBI" id="CHEBI:18420"/>
        <label>1</label>
    </ligand>
</feature>
<feature type="binding site" evidence="2">
    <location>
        <position position="292"/>
    </location>
    <ligand>
        <name>Mg(2+)</name>
        <dbReference type="ChEBI" id="CHEBI:18420"/>
        <label>2</label>
    </ligand>
</feature>
<feature type="binding site" evidence="2">
    <location>
        <position position="292"/>
    </location>
    <ligand>
        <name>Mg(2+)</name>
        <dbReference type="ChEBI" id="CHEBI:18420"/>
        <label>3</label>
    </ligand>
</feature>
<feature type="binding site" evidence="2">
    <location>
        <position position="292"/>
    </location>
    <ligand>
        <name>substrate</name>
    </ligand>
</feature>
<feature type="binding site" evidence="2">
    <location>
        <position position="296"/>
    </location>
    <ligand>
        <name>Mg(2+)</name>
        <dbReference type="ChEBI" id="CHEBI:18420"/>
        <label>1</label>
    </ligand>
</feature>
<feature type="binding site" evidence="2">
    <location>
        <position position="296"/>
    </location>
    <ligand>
        <name>Mg(2+)</name>
        <dbReference type="ChEBI" id="CHEBI:18420"/>
        <label>3</label>
    </ligand>
</feature>
<feature type="binding site" evidence="2">
    <location>
        <position position="296"/>
    </location>
    <ligand>
        <name>substrate</name>
    </ligand>
</feature>
<feature type="binding site" evidence="2">
    <location>
        <position position="342"/>
    </location>
    <ligand>
        <name>Mg(2+)</name>
        <dbReference type="ChEBI" id="CHEBI:18420"/>
        <label>1</label>
    </ligand>
</feature>
<feature type="binding site" evidence="2">
    <location>
        <position position="342"/>
    </location>
    <ligand>
        <name>Mg(2+)</name>
        <dbReference type="ChEBI" id="CHEBI:18420"/>
        <label>3</label>
    </ligand>
</feature>
<feature type="binding site" evidence="2">
    <location>
        <position position="342"/>
    </location>
    <ligand>
        <name>substrate</name>
    </ligand>
</feature>
<feature type="sequence conflict" description="In Ref. 4; BAE98843." evidence="7" ref="4">
    <original>L</original>
    <variation>M</variation>
    <location>
        <position position="125"/>
    </location>
</feature>
<proteinExistence type="evidence at protein level"/>
<evidence type="ECO:0000250" key="1">
    <source>
        <dbReference type="UniProtKB" id="Q9BQG2"/>
    </source>
</evidence>
<evidence type="ECO:0000250" key="2">
    <source>
        <dbReference type="UniProtKB" id="Q9DCN1"/>
    </source>
</evidence>
<evidence type="ECO:0000255" key="3"/>
<evidence type="ECO:0000255" key="4">
    <source>
        <dbReference type="PROSITE-ProRule" id="PRU00794"/>
    </source>
</evidence>
<evidence type="ECO:0000269" key="5">
    <source>
    </source>
</evidence>
<evidence type="ECO:0000303" key="6">
    <source>
    </source>
</evidence>
<evidence type="ECO:0000305" key="7"/>
<reference key="1">
    <citation type="journal article" date="2000" name="Nature">
        <title>Sequence and analysis of chromosome 5 of the plant Arabidopsis thaliana.</title>
        <authorList>
            <person name="Tabata S."/>
            <person name="Kaneko T."/>
            <person name="Nakamura Y."/>
            <person name="Kotani H."/>
            <person name="Kato T."/>
            <person name="Asamizu E."/>
            <person name="Miyajima N."/>
            <person name="Sasamoto S."/>
            <person name="Kimura T."/>
            <person name="Hosouchi T."/>
            <person name="Kawashima K."/>
            <person name="Kohara M."/>
            <person name="Matsumoto M."/>
            <person name="Matsuno A."/>
            <person name="Muraki A."/>
            <person name="Nakayama S."/>
            <person name="Nakazaki N."/>
            <person name="Naruo K."/>
            <person name="Okumura S."/>
            <person name="Shinpo S."/>
            <person name="Takeuchi C."/>
            <person name="Wada T."/>
            <person name="Watanabe A."/>
            <person name="Yamada M."/>
            <person name="Yasuda M."/>
            <person name="Sato S."/>
            <person name="de la Bastide M."/>
            <person name="Huang E."/>
            <person name="Spiegel L."/>
            <person name="Gnoj L."/>
            <person name="O'Shaughnessy A."/>
            <person name="Preston R."/>
            <person name="Habermann K."/>
            <person name="Murray J."/>
            <person name="Johnson D."/>
            <person name="Rohlfing T."/>
            <person name="Nelson J."/>
            <person name="Stoneking T."/>
            <person name="Pepin K."/>
            <person name="Spieth J."/>
            <person name="Sekhon M."/>
            <person name="Armstrong J."/>
            <person name="Becker M."/>
            <person name="Belter E."/>
            <person name="Cordum H."/>
            <person name="Cordes M."/>
            <person name="Courtney L."/>
            <person name="Courtney W."/>
            <person name="Dante M."/>
            <person name="Du H."/>
            <person name="Edwards J."/>
            <person name="Fryman J."/>
            <person name="Haakensen B."/>
            <person name="Lamar E."/>
            <person name="Latreille P."/>
            <person name="Leonard S."/>
            <person name="Meyer R."/>
            <person name="Mulvaney E."/>
            <person name="Ozersky P."/>
            <person name="Riley A."/>
            <person name="Strowmatt C."/>
            <person name="Wagner-McPherson C."/>
            <person name="Wollam A."/>
            <person name="Yoakum M."/>
            <person name="Bell M."/>
            <person name="Dedhia N."/>
            <person name="Parnell L."/>
            <person name="Shah R."/>
            <person name="Rodriguez M."/>
            <person name="Hoon See L."/>
            <person name="Vil D."/>
            <person name="Baker J."/>
            <person name="Kirchoff K."/>
            <person name="Toth K."/>
            <person name="King L."/>
            <person name="Bahret A."/>
            <person name="Miller B."/>
            <person name="Marra M.A."/>
            <person name="Martienssen R."/>
            <person name="McCombie W.R."/>
            <person name="Wilson R.K."/>
            <person name="Murphy G."/>
            <person name="Bancroft I."/>
            <person name="Volckaert G."/>
            <person name="Wambutt R."/>
            <person name="Duesterhoeft A."/>
            <person name="Stiekema W."/>
            <person name="Pohl T."/>
            <person name="Entian K.-D."/>
            <person name="Terryn N."/>
            <person name="Hartley N."/>
            <person name="Bent E."/>
            <person name="Johnson S."/>
            <person name="Langham S.-A."/>
            <person name="McCullagh B."/>
            <person name="Robben J."/>
            <person name="Grymonprez B."/>
            <person name="Zimmermann W."/>
            <person name="Ramsperger U."/>
            <person name="Wedler H."/>
            <person name="Balke K."/>
            <person name="Wedler E."/>
            <person name="Peters S."/>
            <person name="van Staveren M."/>
            <person name="Dirkse W."/>
            <person name="Mooijman P."/>
            <person name="Klein Lankhorst R."/>
            <person name="Weitzenegger T."/>
            <person name="Bothe G."/>
            <person name="Rose M."/>
            <person name="Hauf J."/>
            <person name="Berneiser S."/>
            <person name="Hempel S."/>
            <person name="Feldpausch M."/>
            <person name="Lamberth S."/>
            <person name="Villarroel R."/>
            <person name="Gielen J."/>
            <person name="Ardiles W."/>
            <person name="Bents O."/>
            <person name="Lemcke K."/>
            <person name="Kolesov G."/>
            <person name="Mayer K.F.X."/>
            <person name="Rudd S."/>
            <person name="Schoof H."/>
            <person name="Schueller C."/>
            <person name="Zaccaria P."/>
            <person name="Mewes H.-W."/>
            <person name="Bevan M."/>
            <person name="Fransz P.F."/>
        </authorList>
    </citation>
    <scope>NUCLEOTIDE SEQUENCE [LARGE SCALE GENOMIC DNA]</scope>
    <source>
        <strain>cv. Columbia</strain>
    </source>
</reference>
<reference key="2">
    <citation type="journal article" date="2017" name="Plant J.">
        <title>Araport11: a complete reannotation of the Arabidopsis thaliana reference genome.</title>
        <authorList>
            <person name="Cheng C.Y."/>
            <person name="Krishnakumar V."/>
            <person name="Chan A.P."/>
            <person name="Thibaud-Nissen F."/>
            <person name="Schobel S."/>
            <person name="Town C.D."/>
        </authorList>
    </citation>
    <scope>GENOME REANNOTATION</scope>
    <source>
        <strain>cv. Columbia</strain>
    </source>
</reference>
<reference key="3">
    <citation type="journal article" date="2003" name="Science">
        <title>Empirical analysis of transcriptional activity in the Arabidopsis genome.</title>
        <authorList>
            <person name="Yamada K."/>
            <person name="Lim J."/>
            <person name="Dale J.M."/>
            <person name="Chen H."/>
            <person name="Shinn P."/>
            <person name="Palm C.J."/>
            <person name="Southwick A.M."/>
            <person name="Wu H.C."/>
            <person name="Kim C.J."/>
            <person name="Nguyen M."/>
            <person name="Pham P.K."/>
            <person name="Cheuk R.F."/>
            <person name="Karlin-Newmann G."/>
            <person name="Liu S.X."/>
            <person name="Lam B."/>
            <person name="Sakano H."/>
            <person name="Wu T."/>
            <person name="Yu G."/>
            <person name="Miranda M."/>
            <person name="Quach H.L."/>
            <person name="Tripp M."/>
            <person name="Chang C.H."/>
            <person name="Lee J.M."/>
            <person name="Toriumi M.J."/>
            <person name="Chan M.M."/>
            <person name="Tang C.C."/>
            <person name="Onodera C.S."/>
            <person name="Deng J.M."/>
            <person name="Akiyama K."/>
            <person name="Ansari Y."/>
            <person name="Arakawa T."/>
            <person name="Banh J."/>
            <person name="Banno F."/>
            <person name="Bowser L."/>
            <person name="Brooks S.Y."/>
            <person name="Carninci P."/>
            <person name="Chao Q."/>
            <person name="Choy N."/>
            <person name="Enju A."/>
            <person name="Goldsmith A.D."/>
            <person name="Gurjal M."/>
            <person name="Hansen N.F."/>
            <person name="Hayashizaki Y."/>
            <person name="Johnson-Hopson C."/>
            <person name="Hsuan V.W."/>
            <person name="Iida K."/>
            <person name="Karnes M."/>
            <person name="Khan S."/>
            <person name="Koesema E."/>
            <person name="Ishida J."/>
            <person name="Jiang P.X."/>
            <person name="Jones T."/>
            <person name="Kawai J."/>
            <person name="Kamiya A."/>
            <person name="Meyers C."/>
            <person name="Nakajima M."/>
            <person name="Narusaka M."/>
            <person name="Seki M."/>
            <person name="Sakurai T."/>
            <person name="Satou M."/>
            <person name="Tamse R."/>
            <person name="Vaysberg M."/>
            <person name="Wallender E.K."/>
            <person name="Wong C."/>
            <person name="Yamamura Y."/>
            <person name="Yuan S."/>
            <person name="Shinozaki K."/>
            <person name="Davis R.W."/>
            <person name="Theologis A."/>
            <person name="Ecker J.R."/>
        </authorList>
    </citation>
    <scope>NUCLEOTIDE SEQUENCE [LARGE SCALE MRNA]</scope>
    <source>
        <strain>cv. Columbia</strain>
    </source>
</reference>
<reference key="4">
    <citation type="submission" date="2006-07" db="EMBL/GenBank/DDBJ databases">
        <title>Large-scale analysis of RIKEN Arabidopsis full-length (RAFL) cDNAs.</title>
        <authorList>
            <person name="Totoki Y."/>
            <person name="Seki M."/>
            <person name="Ishida J."/>
            <person name="Nakajima M."/>
            <person name="Enju A."/>
            <person name="Kamiya A."/>
            <person name="Narusaka M."/>
            <person name="Shin-i T."/>
            <person name="Nakagawa M."/>
            <person name="Sakamoto N."/>
            <person name="Oishi K."/>
            <person name="Kohara Y."/>
            <person name="Kobayashi M."/>
            <person name="Toyoda A."/>
            <person name="Sakaki Y."/>
            <person name="Sakurai T."/>
            <person name="Iida K."/>
            <person name="Akiyama K."/>
            <person name="Satou M."/>
            <person name="Toyoda T."/>
            <person name="Konagaya A."/>
            <person name="Carninci P."/>
            <person name="Kawai J."/>
            <person name="Hayashizaki Y."/>
            <person name="Shinozaki K."/>
        </authorList>
    </citation>
    <scope>NUCLEOTIDE SEQUENCE [LARGE SCALE MRNA]</scope>
    <source>
        <strain>cv. Columbia</strain>
    </source>
</reference>
<reference key="5">
    <citation type="journal article" date="2005" name="J. Biol. Chem.">
        <title>Comprehensive analysis of cytosolic nudix hydrolases in Arabidopsis thaliana.</title>
        <authorList>
            <person name="Ogawa T."/>
            <person name="Ueda Y."/>
            <person name="Yoshimura K."/>
            <person name="Shigeoka S."/>
        </authorList>
    </citation>
    <scope>NOMENCLATURE</scope>
</reference>
<reference key="6">
    <citation type="journal article" date="2008" name="Plant Physiol.">
        <title>Molecular characterization of organelle-type Nudix hydrolases in Arabidopsis.</title>
        <authorList>
            <person name="Ogawa T."/>
            <person name="Yoshimura K."/>
            <person name="Miyake H."/>
            <person name="Ishikawa K."/>
            <person name="Ito D."/>
            <person name="Tanabe N."/>
            <person name="Shigeoka S."/>
        </authorList>
    </citation>
    <scope>SUBCELLULAR LOCATION</scope>
    <scope>FUNCTION</scope>
    <scope>CATALYTIC ACTIVITY</scope>
    <scope>TISSUE SPECIFICITY</scope>
    <scope>BIOPHYSICOCHEMICAL PROPERTIES</scope>
    <scope>DISRUPTION PHENOTYPE</scope>
</reference>
<name>NUD19_ARATH</name>
<gene>
    <name type="primary">NUDT19</name>
    <name evidence="6" type="synonym">NUDX19</name>
    <name type="ordered locus">At5g20070</name>
    <name type="ORF">F28I16.220</name>
</gene>
<sequence length="438" mass="48347">MLALFLSSSSYPTLSFLSRSVTLNLARTTTLSALTMSMNLKTHAFAGNPLKSKTPKSTDPFSPTSAFESLKTLIPVIPNHSTPSPDFKVLPFSKGRPLVFSSGGDANTTPIWHLGWVSLADCKVLLASCGVDLNEDSLVYLGPKLEEDLVYWAVDLAEDGFVSELGGRKLCFVELRTLMVAADWADQRAMDELAIAGNARALLEWHNVSQFCGSCGSKTFPKEAGRRKQCSDETCRKRVYPRVDPVVIMLVIDRENDRALLSRQSRYVPRMWSCLAGFIEPGESLEEAVRRETWEETGIEVGDVVYHSSQPWPVGPSSMPCQLMLGFFAFAKTLDINVDKEELEDAQWHSREEVKKALAVAEYRKAQRTAAAKVEQICKGVERSQSLSTDFNLESGELAPMFIPGPFAIAHHLISAWVNQAPDDVHSKQQAGVSLSSL</sequence>
<protein>
    <recommendedName>
        <fullName evidence="7">Nudix hydrolase 19, chloroplastic</fullName>
        <shortName evidence="6">AtNUDT19</shortName>
    </recommendedName>
    <alternativeName>
        <fullName>NAD-capped RNA hydrolase NUDT19</fullName>
        <shortName>DeNADding enzyme NUDT19</shortName>
        <ecNumber evidence="2">3.6.1.-</ecNumber>
    </alternativeName>
    <alternativeName>
        <fullName>NADH pyrophosphatase NUDT19</fullName>
        <ecNumber evidence="5">3.6.1.22</ecNumber>
    </alternativeName>
</protein>
<comment type="function">
    <text evidence="2 5">mRNA decapping enzyme that specifically removes the nicotinamide adenine dinucleotide (NAD) cap from a subset of mRNAs by hydrolyzing the diphosphate linkage to produce nicotinamide mononucleotide (NMN) and 5' monophosphate mRNA. The NAD-cap is present at the 5'-end of some RNAs; in contrast to the canonical N7 methylguanosine (m7G) cap, the NAD cap promotes mRNA decay (By similarity). Mediates the hydrolysis of some nucleoside diphosphate derivatives. Has a high affinity for NADPH compared with that for NADH (PubMed:18815383).</text>
</comment>
<comment type="catalytic activity">
    <reaction evidence="2">
        <text>a 5'-end NAD(+)-phospho-ribonucleoside in mRNA + H2O = a 5'-end phospho-adenosine-phospho-ribonucleoside in mRNA + beta-nicotinamide D-ribonucleotide + 2 H(+)</text>
        <dbReference type="Rhea" id="RHEA:60876"/>
        <dbReference type="Rhea" id="RHEA-COMP:15698"/>
        <dbReference type="Rhea" id="RHEA-COMP:15719"/>
        <dbReference type="ChEBI" id="CHEBI:14649"/>
        <dbReference type="ChEBI" id="CHEBI:15377"/>
        <dbReference type="ChEBI" id="CHEBI:15378"/>
        <dbReference type="ChEBI" id="CHEBI:144029"/>
        <dbReference type="ChEBI" id="CHEBI:144051"/>
    </reaction>
    <physiologicalReaction direction="left-to-right" evidence="2">
        <dbReference type="Rhea" id="RHEA:60877"/>
    </physiologicalReaction>
</comment>
<comment type="catalytic activity">
    <reaction evidence="5">
        <text>NAD(+) + H2O = beta-nicotinamide D-ribonucleotide + AMP + 2 H(+)</text>
        <dbReference type="Rhea" id="RHEA:11800"/>
        <dbReference type="ChEBI" id="CHEBI:14649"/>
        <dbReference type="ChEBI" id="CHEBI:15377"/>
        <dbReference type="ChEBI" id="CHEBI:15378"/>
        <dbReference type="ChEBI" id="CHEBI:57540"/>
        <dbReference type="ChEBI" id="CHEBI:456215"/>
        <dbReference type="EC" id="3.6.1.22"/>
    </reaction>
</comment>
<comment type="catalytic activity">
    <reaction evidence="5">
        <text>NADH + H2O = reduced beta-nicotinamide D-ribonucleotide + AMP + 2 H(+)</text>
        <dbReference type="Rhea" id="RHEA:48868"/>
        <dbReference type="ChEBI" id="CHEBI:15377"/>
        <dbReference type="ChEBI" id="CHEBI:15378"/>
        <dbReference type="ChEBI" id="CHEBI:57945"/>
        <dbReference type="ChEBI" id="CHEBI:90832"/>
        <dbReference type="ChEBI" id="CHEBI:456215"/>
        <dbReference type="EC" id="3.6.1.22"/>
    </reaction>
</comment>
<comment type="cofactor">
    <cofactor evidence="2">
        <name>Mg(2+)</name>
        <dbReference type="ChEBI" id="CHEBI:18420"/>
    </cofactor>
    <text evidence="2">Binds 3 Mg(2+) ions per subunit.</text>
</comment>
<comment type="cofactor">
    <cofactor evidence="2">
        <name>Zn(2+)</name>
        <dbReference type="ChEBI" id="CHEBI:29105"/>
    </cofactor>
    <text evidence="2">Binds 1 zinc ion per subunit.</text>
</comment>
<comment type="biophysicochemical properties">
    <kinetics>
        <KM evidence="5">335.3 uM for NADH</KM>
        <KM evidence="5">36.9 uM for NADPH</KM>
        <Vmax evidence="5">0.74 umol/min/mg enzyme with NADH as substrate</Vmax>
        <Vmax evidence="5">0.78 umol/min/mg enzyme with NADPH as substrate</Vmax>
    </kinetics>
</comment>
<comment type="subcellular location">
    <subcellularLocation>
        <location evidence="5">Plastid</location>
        <location evidence="5">Chloroplast</location>
    </subcellularLocation>
</comment>
<comment type="tissue specificity">
    <text evidence="5">Expressed in roots, leaves, stems and inflorescences.</text>
</comment>
<comment type="disruption phenotype">
    <text evidence="5">No visible phenotype under normal growth conditions.</text>
</comment>
<comment type="similarity">
    <text evidence="7">Belongs to the Nudix hydrolase family. NudC subfamily.</text>
</comment>
<accession>Q94A82</accession>
<accession>Q0WV54</accession>
<accession>Q0WVK5</accession>